<comment type="function">
    <text evidence="1">Plays an important role in the de novo pathway of purine nucleotide biosynthesis. Catalyzes the first committed step in the biosynthesis of AMP from IMP.</text>
</comment>
<comment type="catalytic activity">
    <reaction evidence="1">
        <text>IMP + L-aspartate + GTP = N(6)-(1,2-dicarboxyethyl)-AMP + GDP + phosphate + 2 H(+)</text>
        <dbReference type="Rhea" id="RHEA:15753"/>
        <dbReference type="ChEBI" id="CHEBI:15378"/>
        <dbReference type="ChEBI" id="CHEBI:29991"/>
        <dbReference type="ChEBI" id="CHEBI:37565"/>
        <dbReference type="ChEBI" id="CHEBI:43474"/>
        <dbReference type="ChEBI" id="CHEBI:57567"/>
        <dbReference type="ChEBI" id="CHEBI:58053"/>
        <dbReference type="ChEBI" id="CHEBI:58189"/>
        <dbReference type="EC" id="6.3.4.4"/>
    </reaction>
</comment>
<comment type="cofactor">
    <cofactor evidence="1">
        <name>Mg(2+)</name>
        <dbReference type="ChEBI" id="CHEBI:18420"/>
    </cofactor>
    <text evidence="1">Binds 1 Mg(2+) ion per subunit.</text>
</comment>
<comment type="pathway">
    <text evidence="1">Purine metabolism; AMP biosynthesis via de novo pathway; AMP from IMP: step 1/2.</text>
</comment>
<comment type="subunit">
    <text evidence="1">Homodimer.</text>
</comment>
<comment type="subcellular location">
    <subcellularLocation>
        <location evidence="1">Cytoplasm</location>
    </subcellularLocation>
</comment>
<comment type="similarity">
    <text evidence="1">Belongs to the adenylosuccinate synthetase family.</text>
</comment>
<protein>
    <recommendedName>
        <fullName evidence="1">Adenylosuccinate synthetase</fullName>
        <shortName evidence="1">AMPSase</shortName>
        <shortName evidence="1">AdSS</shortName>
        <ecNumber evidence="1">6.3.4.4</ecNumber>
    </recommendedName>
    <alternativeName>
        <fullName evidence="1">IMP--aspartate ligase</fullName>
    </alternativeName>
</protein>
<gene>
    <name evidence="1" type="primary">purA</name>
    <name type="ordered locus">CBO3616</name>
    <name type="ordered locus">CLC_3615</name>
</gene>
<keyword id="KW-0963">Cytoplasm</keyword>
<keyword id="KW-0342">GTP-binding</keyword>
<keyword id="KW-0436">Ligase</keyword>
<keyword id="KW-0460">Magnesium</keyword>
<keyword id="KW-0479">Metal-binding</keyword>
<keyword id="KW-0547">Nucleotide-binding</keyword>
<keyword id="KW-0658">Purine biosynthesis</keyword>
<keyword id="KW-1185">Reference proteome</keyword>
<proteinExistence type="inferred from homology"/>
<feature type="chain" id="PRO_1000000803" description="Adenylosuccinate synthetase">
    <location>
        <begin position="1"/>
        <end position="428"/>
    </location>
</feature>
<feature type="active site" description="Proton acceptor" evidence="1">
    <location>
        <position position="13"/>
    </location>
</feature>
<feature type="active site" description="Proton donor" evidence="1">
    <location>
        <position position="41"/>
    </location>
</feature>
<feature type="binding site" evidence="1">
    <location>
        <begin position="12"/>
        <end position="18"/>
    </location>
    <ligand>
        <name>GTP</name>
        <dbReference type="ChEBI" id="CHEBI:37565"/>
    </ligand>
</feature>
<feature type="binding site" description="in other chain" evidence="1">
    <location>
        <begin position="13"/>
        <end position="16"/>
    </location>
    <ligand>
        <name>IMP</name>
        <dbReference type="ChEBI" id="CHEBI:58053"/>
        <note>ligand shared between dimeric partners</note>
    </ligand>
</feature>
<feature type="binding site" evidence="1">
    <location>
        <position position="13"/>
    </location>
    <ligand>
        <name>Mg(2+)</name>
        <dbReference type="ChEBI" id="CHEBI:18420"/>
    </ligand>
</feature>
<feature type="binding site" description="in other chain" evidence="1">
    <location>
        <begin position="38"/>
        <end position="41"/>
    </location>
    <ligand>
        <name>IMP</name>
        <dbReference type="ChEBI" id="CHEBI:58053"/>
        <note>ligand shared between dimeric partners</note>
    </ligand>
</feature>
<feature type="binding site" evidence="1">
    <location>
        <begin position="40"/>
        <end position="42"/>
    </location>
    <ligand>
        <name>GTP</name>
        <dbReference type="ChEBI" id="CHEBI:37565"/>
    </ligand>
</feature>
<feature type="binding site" evidence="1">
    <location>
        <position position="40"/>
    </location>
    <ligand>
        <name>Mg(2+)</name>
        <dbReference type="ChEBI" id="CHEBI:18420"/>
    </ligand>
</feature>
<feature type="binding site" description="in other chain" evidence="1">
    <location>
        <position position="130"/>
    </location>
    <ligand>
        <name>IMP</name>
        <dbReference type="ChEBI" id="CHEBI:58053"/>
        <note>ligand shared between dimeric partners</note>
    </ligand>
</feature>
<feature type="binding site" evidence="1">
    <location>
        <position position="144"/>
    </location>
    <ligand>
        <name>IMP</name>
        <dbReference type="ChEBI" id="CHEBI:58053"/>
        <note>ligand shared between dimeric partners</note>
    </ligand>
</feature>
<feature type="binding site" description="in other chain" evidence="1">
    <location>
        <position position="225"/>
    </location>
    <ligand>
        <name>IMP</name>
        <dbReference type="ChEBI" id="CHEBI:58053"/>
        <note>ligand shared between dimeric partners</note>
    </ligand>
</feature>
<feature type="binding site" description="in other chain" evidence="1">
    <location>
        <position position="240"/>
    </location>
    <ligand>
        <name>IMP</name>
        <dbReference type="ChEBI" id="CHEBI:58053"/>
        <note>ligand shared between dimeric partners</note>
    </ligand>
</feature>
<feature type="binding site" evidence="1">
    <location>
        <begin position="300"/>
        <end position="306"/>
    </location>
    <ligand>
        <name>substrate</name>
    </ligand>
</feature>
<feature type="binding site" description="in other chain" evidence="1">
    <location>
        <position position="304"/>
    </location>
    <ligand>
        <name>IMP</name>
        <dbReference type="ChEBI" id="CHEBI:58053"/>
        <note>ligand shared between dimeric partners</note>
    </ligand>
</feature>
<feature type="binding site" evidence="1">
    <location>
        <position position="306"/>
    </location>
    <ligand>
        <name>GTP</name>
        <dbReference type="ChEBI" id="CHEBI:37565"/>
    </ligand>
</feature>
<feature type="binding site" evidence="1">
    <location>
        <begin position="332"/>
        <end position="334"/>
    </location>
    <ligand>
        <name>GTP</name>
        <dbReference type="ChEBI" id="CHEBI:37565"/>
    </ligand>
</feature>
<feature type="binding site" evidence="1">
    <location>
        <begin position="414"/>
        <end position="416"/>
    </location>
    <ligand>
        <name>GTP</name>
        <dbReference type="ChEBI" id="CHEBI:37565"/>
    </ligand>
</feature>
<name>PURA_CLOBH</name>
<sequence>MSAFIVLGAQWGDEGKGKMTDYLAENADVVVRFQGGNNAGHTVVVGEKEYKLHLIPSGILYNDKLNVIGNGVVLDPKALFEEINYLESLGVEITPDRLIISDRAHVIMPYHRILDGIKERARGNKDIGTTGKGIGPSYTDKMERSGIRVCDLIHKEVFEENLKETLEVKNKIITEIFGGRALDYNEIYNEYLGYAEKLRPFVKDISVIVNKKIKDGKEVLFEGAQGTLLDIDYGTYPYVTSSSTIAGGVCIGAGVGPTAITNAVGIAKAYTTRVGKGPFPTELLDSTGDWVREKGHEFGVTTGRARRCGWLDLVILKTSARISGLTSFAVTKIDTLAGLDTLKVCTGYRLNGEIIDYVPASLEDLAKCEPIYEEFEGWDDSIANARCYEDLPENAIKYLKKIEDFTETKVSIVSVGPKRDQTMMISEI</sequence>
<evidence type="ECO:0000255" key="1">
    <source>
        <dbReference type="HAMAP-Rule" id="MF_00011"/>
    </source>
</evidence>
<organism>
    <name type="scientific">Clostridium botulinum (strain Hall / ATCC 3502 / NCTC 13319 / Type A)</name>
    <dbReference type="NCBI Taxonomy" id="441771"/>
    <lineage>
        <taxon>Bacteria</taxon>
        <taxon>Bacillati</taxon>
        <taxon>Bacillota</taxon>
        <taxon>Clostridia</taxon>
        <taxon>Eubacteriales</taxon>
        <taxon>Clostridiaceae</taxon>
        <taxon>Clostridium</taxon>
    </lineage>
</organism>
<accession>A5I7Y9</accession>
<accession>A7G972</accession>
<dbReference type="EC" id="6.3.4.4" evidence="1"/>
<dbReference type="EMBL" id="CP000727">
    <property type="protein sequence ID" value="ABS38616.1"/>
    <property type="molecule type" value="Genomic_DNA"/>
</dbReference>
<dbReference type="EMBL" id="AM412317">
    <property type="protein sequence ID" value="CAL85174.1"/>
    <property type="molecule type" value="Genomic_DNA"/>
</dbReference>
<dbReference type="RefSeq" id="WP_012048438.1">
    <property type="nucleotide sequence ID" value="NC_009698.1"/>
</dbReference>
<dbReference type="RefSeq" id="YP_001256094.1">
    <property type="nucleotide sequence ID" value="NC_009495.1"/>
</dbReference>
<dbReference type="RefSeq" id="YP_001389337.1">
    <property type="nucleotide sequence ID" value="NC_009698.1"/>
</dbReference>
<dbReference type="SMR" id="A5I7Y9"/>
<dbReference type="GeneID" id="5184592"/>
<dbReference type="KEGG" id="cbh:CLC_3615"/>
<dbReference type="KEGG" id="cbo:CBO3616"/>
<dbReference type="PATRIC" id="fig|413999.7.peg.3592"/>
<dbReference type="HOGENOM" id="CLU_029848_0_0_9"/>
<dbReference type="UniPathway" id="UPA00075">
    <property type="reaction ID" value="UER00335"/>
</dbReference>
<dbReference type="PRO" id="PR:A5I7Y9"/>
<dbReference type="Proteomes" id="UP000001986">
    <property type="component" value="Chromosome"/>
</dbReference>
<dbReference type="GO" id="GO:0005737">
    <property type="term" value="C:cytoplasm"/>
    <property type="evidence" value="ECO:0000318"/>
    <property type="project" value="GO_Central"/>
</dbReference>
<dbReference type="GO" id="GO:0004019">
    <property type="term" value="F:adenylosuccinate synthase activity"/>
    <property type="evidence" value="ECO:0000318"/>
    <property type="project" value="GO_Central"/>
</dbReference>
<dbReference type="GO" id="GO:0005525">
    <property type="term" value="F:GTP binding"/>
    <property type="evidence" value="ECO:0007669"/>
    <property type="project" value="UniProtKB-UniRule"/>
</dbReference>
<dbReference type="GO" id="GO:0000287">
    <property type="term" value="F:magnesium ion binding"/>
    <property type="evidence" value="ECO:0007669"/>
    <property type="project" value="UniProtKB-UniRule"/>
</dbReference>
<dbReference type="GO" id="GO:0044208">
    <property type="term" value="P:'de novo' AMP biosynthetic process"/>
    <property type="evidence" value="ECO:0000318"/>
    <property type="project" value="GO_Central"/>
</dbReference>
<dbReference type="GO" id="GO:0046040">
    <property type="term" value="P:IMP metabolic process"/>
    <property type="evidence" value="ECO:0000318"/>
    <property type="project" value="GO_Central"/>
</dbReference>
<dbReference type="CDD" id="cd03108">
    <property type="entry name" value="AdSS"/>
    <property type="match status" value="1"/>
</dbReference>
<dbReference type="FunFam" id="1.10.300.10:FF:000001">
    <property type="entry name" value="Adenylosuccinate synthetase"/>
    <property type="match status" value="1"/>
</dbReference>
<dbReference type="FunFam" id="3.90.170.10:FF:000001">
    <property type="entry name" value="Adenylosuccinate synthetase"/>
    <property type="match status" value="1"/>
</dbReference>
<dbReference type="Gene3D" id="3.40.440.10">
    <property type="entry name" value="Adenylosuccinate Synthetase, subunit A, domain 1"/>
    <property type="match status" value="1"/>
</dbReference>
<dbReference type="Gene3D" id="1.10.300.10">
    <property type="entry name" value="Adenylosuccinate Synthetase, subunit A, domain 2"/>
    <property type="match status" value="1"/>
</dbReference>
<dbReference type="Gene3D" id="3.90.170.10">
    <property type="entry name" value="Adenylosuccinate Synthetase, subunit A, domain 3"/>
    <property type="match status" value="1"/>
</dbReference>
<dbReference type="HAMAP" id="MF_00011">
    <property type="entry name" value="Adenylosucc_synth"/>
    <property type="match status" value="1"/>
</dbReference>
<dbReference type="InterPro" id="IPR018220">
    <property type="entry name" value="Adenylosuccin_syn_GTP-bd"/>
</dbReference>
<dbReference type="InterPro" id="IPR033128">
    <property type="entry name" value="Adenylosuccin_syn_Lys_AS"/>
</dbReference>
<dbReference type="InterPro" id="IPR042109">
    <property type="entry name" value="Adenylosuccinate_synth_dom1"/>
</dbReference>
<dbReference type="InterPro" id="IPR042110">
    <property type="entry name" value="Adenylosuccinate_synth_dom2"/>
</dbReference>
<dbReference type="InterPro" id="IPR042111">
    <property type="entry name" value="Adenylosuccinate_synth_dom3"/>
</dbReference>
<dbReference type="InterPro" id="IPR001114">
    <property type="entry name" value="Adenylosuccinate_synthetase"/>
</dbReference>
<dbReference type="InterPro" id="IPR027417">
    <property type="entry name" value="P-loop_NTPase"/>
</dbReference>
<dbReference type="NCBIfam" id="NF002223">
    <property type="entry name" value="PRK01117.1"/>
    <property type="match status" value="1"/>
</dbReference>
<dbReference type="NCBIfam" id="TIGR00184">
    <property type="entry name" value="purA"/>
    <property type="match status" value="1"/>
</dbReference>
<dbReference type="PANTHER" id="PTHR11846">
    <property type="entry name" value="ADENYLOSUCCINATE SYNTHETASE"/>
    <property type="match status" value="1"/>
</dbReference>
<dbReference type="PANTHER" id="PTHR11846:SF0">
    <property type="entry name" value="ADENYLOSUCCINATE SYNTHETASE"/>
    <property type="match status" value="1"/>
</dbReference>
<dbReference type="Pfam" id="PF00709">
    <property type="entry name" value="Adenylsucc_synt"/>
    <property type="match status" value="1"/>
</dbReference>
<dbReference type="SMART" id="SM00788">
    <property type="entry name" value="Adenylsucc_synt"/>
    <property type="match status" value="1"/>
</dbReference>
<dbReference type="SUPFAM" id="SSF52540">
    <property type="entry name" value="P-loop containing nucleoside triphosphate hydrolases"/>
    <property type="match status" value="1"/>
</dbReference>
<dbReference type="PROSITE" id="PS01266">
    <property type="entry name" value="ADENYLOSUCCIN_SYN_1"/>
    <property type="match status" value="1"/>
</dbReference>
<dbReference type="PROSITE" id="PS00513">
    <property type="entry name" value="ADENYLOSUCCIN_SYN_2"/>
    <property type="match status" value="1"/>
</dbReference>
<reference key="1">
    <citation type="journal article" date="2007" name="Genome Res.">
        <title>Genome sequence of a proteolytic (Group I) Clostridium botulinum strain Hall A and comparative analysis of the clostridial genomes.</title>
        <authorList>
            <person name="Sebaihia M."/>
            <person name="Peck M.W."/>
            <person name="Minton N.P."/>
            <person name="Thomson N.R."/>
            <person name="Holden M.T.G."/>
            <person name="Mitchell W.J."/>
            <person name="Carter A.T."/>
            <person name="Bentley S.D."/>
            <person name="Mason D.R."/>
            <person name="Crossman L."/>
            <person name="Paul C.J."/>
            <person name="Ivens A."/>
            <person name="Wells-Bennik M.H.J."/>
            <person name="Davis I.J."/>
            <person name="Cerdeno-Tarraga A.M."/>
            <person name="Churcher C."/>
            <person name="Quail M.A."/>
            <person name="Chillingworth T."/>
            <person name="Feltwell T."/>
            <person name="Fraser A."/>
            <person name="Goodhead I."/>
            <person name="Hance Z."/>
            <person name="Jagels K."/>
            <person name="Larke N."/>
            <person name="Maddison M."/>
            <person name="Moule S."/>
            <person name="Mungall K."/>
            <person name="Norbertczak H."/>
            <person name="Rabbinowitsch E."/>
            <person name="Sanders M."/>
            <person name="Simmonds M."/>
            <person name="White B."/>
            <person name="Whithead S."/>
            <person name="Parkhill J."/>
        </authorList>
    </citation>
    <scope>NUCLEOTIDE SEQUENCE [LARGE SCALE GENOMIC DNA]</scope>
    <source>
        <strain>Hall / ATCC 3502 / NCTC 13319 / Type A</strain>
    </source>
</reference>
<reference key="2">
    <citation type="journal article" date="2007" name="PLoS ONE">
        <title>Analysis of the neurotoxin complex genes in Clostridium botulinum A1-A4 and B1 strains: BoNT/A3, /Ba4 and /B1 clusters are located within plasmids.</title>
        <authorList>
            <person name="Smith T.J."/>
            <person name="Hill K.K."/>
            <person name="Foley B.T."/>
            <person name="Detter J.C."/>
            <person name="Munk A.C."/>
            <person name="Bruce D.C."/>
            <person name="Doggett N.A."/>
            <person name="Smith L.A."/>
            <person name="Marks J.D."/>
            <person name="Xie G."/>
            <person name="Brettin T.S."/>
        </authorList>
    </citation>
    <scope>NUCLEOTIDE SEQUENCE [LARGE SCALE GENOMIC DNA]</scope>
    <source>
        <strain>Hall / ATCC 3502 / NCTC 13319 / Type A</strain>
    </source>
</reference>